<dbReference type="EC" id="5.6.1.7" evidence="1"/>
<dbReference type="EMBL" id="BX548174">
    <property type="protein sequence ID" value="CAE19895.1"/>
    <property type="molecule type" value="Genomic_DNA"/>
</dbReference>
<dbReference type="SMR" id="Q7TU44"/>
<dbReference type="STRING" id="59919.PMM1436"/>
<dbReference type="KEGG" id="pmm:PMM1436"/>
<dbReference type="eggNOG" id="COG0459">
    <property type="taxonomic scope" value="Bacteria"/>
</dbReference>
<dbReference type="HOGENOM" id="CLU_016503_3_0_3"/>
<dbReference type="OrthoDB" id="9766614at2"/>
<dbReference type="Proteomes" id="UP000001026">
    <property type="component" value="Chromosome"/>
</dbReference>
<dbReference type="GO" id="GO:0005737">
    <property type="term" value="C:cytoplasm"/>
    <property type="evidence" value="ECO:0007669"/>
    <property type="project" value="UniProtKB-SubCell"/>
</dbReference>
<dbReference type="GO" id="GO:0005524">
    <property type="term" value="F:ATP binding"/>
    <property type="evidence" value="ECO:0007669"/>
    <property type="project" value="UniProtKB-UniRule"/>
</dbReference>
<dbReference type="GO" id="GO:0140662">
    <property type="term" value="F:ATP-dependent protein folding chaperone"/>
    <property type="evidence" value="ECO:0007669"/>
    <property type="project" value="InterPro"/>
</dbReference>
<dbReference type="GO" id="GO:0016853">
    <property type="term" value="F:isomerase activity"/>
    <property type="evidence" value="ECO:0007669"/>
    <property type="project" value="UniProtKB-KW"/>
</dbReference>
<dbReference type="GO" id="GO:0051082">
    <property type="term" value="F:unfolded protein binding"/>
    <property type="evidence" value="ECO:0007669"/>
    <property type="project" value="UniProtKB-UniRule"/>
</dbReference>
<dbReference type="GO" id="GO:0042026">
    <property type="term" value="P:protein refolding"/>
    <property type="evidence" value="ECO:0007669"/>
    <property type="project" value="UniProtKB-UniRule"/>
</dbReference>
<dbReference type="CDD" id="cd03344">
    <property type="entry name" value="GroEL"/>
    <property type="match status" value="1"/>
</dbReference>
<dbReference type="FunFam" id="3.50.7.10:FF:000001">
    <property type="entry name" value="60 kDa chaperonin"/>
    <property type="match status" value="1"/>
</dbReference>
<dbReference type="Gene3D" id="3.50.7.10">
    <property type="entry name" value="GroEL"/>
    <property type="match status" value="1"/>
</dbReference>
<dbReference type="Gene3D" id="1.10.560.10">
    <property type="entry name" value="GroEL-like equatorial domain"/>
    <property type="match status" value="1"/>
</dbReference>
<dbReference type="Gene3D" id="3.30.260.10">
    <property type="entry name" value="TCP-1-like chaperonin intermediate domain"/>
    <property type="match status" value="1"/>
</dbReference>
<dbReference type="HAMAP" id="MF_00600">
    <property type="entry name" value="CH60"/>
    <property type="match status" value="1"/>
</dbReference>
<dbReference type="InterPro" id="IPR018370">
    <property type="entry name" value="Chaperonin_Cpn60_CS"/>
</dbReference>
<dbReference type="InterPro" id="IPR001844">
    <property type="entry name" value="Cpn60/GroEL"/>
</dbReference>
<dbReference type="InterPro" id="IPR002423">
    <property type="entry name" value="Cpn60/GroEL/TCP-1"/>
</dbReference>
<dbReference type="InterPro" id="IPR027409">
    <property type="entry name" value="GroEL-like_apical_dom_sf"/>
</dbReference>
<dbReference type="InterPro" id="IPR027413">
    <property type="entry name" value="GROEL-like_equatorial_sf"/>
</dbReference>
<dbReference type="InterPro" id="IPR027410">
    <property type="entry name" value="TCP-1-like_intermed_sf"/>
</dbReference>
<dbReference type="NCBIfam" id="TIGR02348">
    <property type="entry name" value="GroEL"/>
    <property type="match status" value="1"/>
</dbReference>
<dbReference type="NCBIfam" id="NF000592">
    <property type="entry name" value="PRK00013.1"/>
    <property type="match status" value="1"/>
</dbReference>
<dbReference type="NCBIfam" id="NF009487">
    <property type="entry name" value="PRK12849.1"/>
    <property type="match status" value="1"/>
</dbReference>
<dbReference type="NCBIfam" id="NF009488">
    <property type="entry name" value="PRK12850.1"/>
    <property type="match status" value="1"/>
</dbReference>
<dbReference type="NCBIfam" id="NF009489">
    <property type="entry name" value="PRK12851.1"/>
    <property type="match status" value="1"/>
</dbReference>
<dbReference type="PANTHER" id="PTHR45633">
    <property type="entry name" value="60 KDA HEAT SHOCK PROTEIN, MITOCHONDRIAL"/>
    <property type="match status" value="1"/>
</dbReference>
<dbReference type="Pfam" id="PF00118">
    <property type="entry name" value="Cpn60_TCP1"/>
    <property type="match status" value="1"/>
</dbReference>
<dbReference type="PRINTS" id="PR00298">
    <property type="entry name" value="CHAPERONIN60"/>
</dbReference>
<dbReference type="SUPFAM" id="SSF52029">
    <property type="entry name" value="GroEL apical domain-like"/>
    <property type="match status" value="1"/>
</dbReference>
<dbReference type="SUPFAM" id="SSF48592">
    <property type="entry name" value="GroEL equatorial domain-like"/>
    <property type="match status" value="2"/>
</dbReference>
<dbReference type="PROSITE" id="PS00296">
    <property type="entry name" value="CHAPERONINS_CPN60"/>
    <property type="match status" value="1"/>
</dbReference>
<keyword id="KW-0067">ATP-binding</keyword>
<keyword id="KW-0143">Chaperone</keyword>
<keyword id="KW-0963">Cytoplasm</keyword>
<keyword id="KW-0413">Isomerase</keyword>
<keyword id="KW-0547">Nucleotide-binding</keyword>
<accession>Q7TU44</accession>
<feature type="chain" id="PRO_0000063485" description="Chaperonin GroEL 2">
    <location>
        <begin position="1"/>
        <end position="544"/>
    </location>
</feature>
<feature type="binding site" evidence="1">
    <location>
        <begin position="29"/>
        <end position="32"/>
    </location>
    <ligand>
        <name>ATP</name>
        <dbReference type="ChEBI" id="CHEBI:30616"/>
    </ligand>
</feature>
<feature type="binding site" evidence="1">
    <location>
        <begin position="86"/>
        <end position="90"/>
    </location>
    <ligand>
        <name>ATP</name>
        <dbReference type="ChEBI" id="CHEBI:30616"/>
    </ligand>
</feature>
<feature type="binding site" evidence="1">
    <location>
        <position position="413"/>
    </location>
    <ligand>
        <name>ATP</name>
        <dbReference type="ChEBI" id="CHEBI:30616"/>
    </ligand>
</feature>
<feature type="binding site" evidence="1">
    <location>
        <begin position="479"/>
        <end position="481"/>
    </location>
    <ligand>
        <name>ATP</name>
        <dbReference type="ChEBI" id="CHEBI:30616"/>
    </ligand>
</feature>
<feature type="binding site" evidence="1">
    <location>
        <position position="495"/>
    </location>
    <ligand>
        <name>ATP</name>
        <dbReference type="ChEBI" id="CHEBI:30616"/>
    </ligand>
</feature>
<proteinExistence type="inferred from homology"/>
<comment type="function">
    <text evidence="1">Together with its co-chaperonin GroES, plays an essential role in assisting protein folding. The GroEL-GroES system forms a nano-cage that allows encapsulation of the non-native substrate proteins and provides a physical environment optimized to promote and accelerate protein folding.</text>
</comment>
<comment type="catalytic activity">
    <reaction evidence="1">
        <text>ATP + H2O + a folded polypeptide = ADP + phosphate + an unfolded polypeptide.</text>
        <dbReference type="EC" id="5.6.1.7"/>
    </reaction>
</comment>
<comment type="subunit">
    <text evidence="1">Forms a cylinder of 14 subunits composed of two heptameric rings stacked back-to-back. Interacts with the co-chaperonin GroES.</text>
</comment>
<comment type="subcellular location">
    <subcellularLocation>
        <location evidence="1">Cytoplasm</location>
    </subcellularLocation>
</comment>
<comment type="similarity">
    <text evidence="1">Belongs to the chaperonin (HSP60) family.</text>
</comment>
<gene>
    <name evidence="1" type="primary">groEL2</name>
    <name evidence="1" type="synonym">groL2</name>
    <name type="ordered locus">PMM1436</name>
</gene>
<protein>
    <recommendedName>
        <fullName evidence="1">Chaperonin GroEL 2</fullName>
        <ecNumber evidence="1">5.6.1.7</ecNumber>
    </recommendedName>
    <alternativeName>
        <fullName evidence="1">60 kDa chaperonin 2</fullName>
    </alternativeName>
    <alternativeName>
        <fullName evidence="1">Chaperonin-60 2</fullName>
        <shortName evidence="1">Cpn60 2</shortName>
    </alternativeName>
</protein>
<organism>
    <name type="scientific">Prochlorococcus marinus subsp. pastoris (strain CCMP1986 / NIES-2087 / MED4)</name>
    <dbReference type="NCBI Taxonomy" id="59919"/>
    <lineage>
        <taxon>Bacteria</taxon>
        <taxon>Bacillati</taxon>
        <taxon>Cyanobacteriota</taxon>
        <taxon>Cyanophyceae</taxon>
        <taxon>Synechococcales</taxon>
        <taxon>Prochlorococcaceae</taxon>
        <taxon>Prochlorococcus</taxon>
    </lineage>
</organism>
<reference key="1">
    <citation type="journal article" date="2003" name="Nature">
        <title>Genome divergence in two Prochlorococcus ecotypes reflects oceanic niche differentiation.</title>
        <authorList>
            <person name="Rocap G."/>
            <person name="Larimer F.W."/>
            <person name="Lamerdin J.E."/>
            <person name="Malfatti S."/>
            <person name="Chain P."/>
            <person name="Ahlgren N.A."/>
            <person name="Arellano A."/>
            <person name="Coleman M."/>
            <person name="Hauser L."/>
            <person name="Hess W.R."/>
            <person name="Johnson Z.I."/>
            <person name="Land M.L."/>
            <person name="Lindell D."/>
            <person name="Post A.F."/>
            <person name="Regala W."/>
            <person name="Shah M."/>
            <person name="Shaw S.L."/>
            <person name="Steglich C."/>
            <person name="Sullivan M.B."/>
            <person name="Ting C.S."/>
            <person name="Tolonen A."/>
            <person name="Webb E.A."/>
            <person name="Zinser E.R."/>
            <person name="Chisholm S.W."/>
        </authorList>
    </citation>
    <scope>NUCLEOTIDE SEQUENCE [LARGE SCALE GENOMIC DNA]</scope>
    <source>
        <strain>CCMP1986 / NIES-2087 / MED4</strain>
    </source>
</reference>
<name>CH602_PROMP</name>
<evidence type="ECO:0000255" key="1">
    <source>
        <dbReference type="HAMAP-Rule" id="MF_00600"/>
    </source>
</evidence>
<sequence length="544" mass="57441">MAKRIIYNEQARRALERGIDILAESVAVTLGPKGRNVVLEKKFGAPQIINDGVTIAKEIELEDHIENTGVALIRQAASKTNDAAGDGTTTATVLAHAMVKAGLRNVAAGANAITLKKGIDKATEFLVGKIEENSKPISDSTAIAQCGTIAAGNDEEVGEMIANAMDKVGKEGVISLEEGKSMTTELEVTEGMRFDKGYISPYFATDTERMEAVLDEPYILLTDKKIALVQDLVPVLEQIAKTGKPLVIIAEDIEKEALATLVVNRLRGVLNVAAVKAPGFGDRRKAMLEDMAVLTNGQLITEDAGLKLENATLEMLGTGRRITINKETTTIVAEGNEKAVTARCDQIKKQMDETDSSYDKEKLQERLAKLAGGVAVIKVGAATETEMKDKKLRLEDAINATKAAVEEGIVPGGGTTLAHLAPILKEWADKALSGEELIGANIVEASLTSPLMRIAENAGSNGAVIAENVKSKPFNDGFNAATGDYVDMSAAGIVDPAKVTRSGLQNAASIAGMVLTTECIVADLPEKKDAAPAGAPGMGGDFDY</sequence>